<keyword id="KW-0963">Cytoplasm</keyword>
<keyword id="KW-0275">Fatty acid biosynthesis</keyword>
<keyword id="KW-0276">Fatty acid metabolism</keyword>
<keyword id="KW-0444">Lipid biosynthesis</keyword>
<keyword id="KW-0443">Lipid metabolism</keyword>
<keyword id="KW-0596">Phosphopantetheine</keyword>
<keyword id="KW-0597">Phosphoprotein</keyword>
<comment type="function">
    <text evidence="1">Carrier of the growing fatty acid chain in fatty acid biosynthesis.</text>
</comment>
<comment type="pathway">
    <text evidence="1">Lipid metabolism; fatty acid biosynthesis.</text>
</comment>
<comment type="subcellular location">
    <subcellularLocation>
        <location evidence="1">Cytoplasm</location>
    </subcellularLocation>
</comment>
<comment type="PTM">
    <text evidence="1">4'-phosphopantetheine is transferred from CoA to a specific serine of apo-ACP by AcpS. This modification is essential for activity because fatty acids are bound in thioester linkage to the sulfhydryl of the prosthetic group.</text>
</comment>
<comment type="similarity">
    <text evidence="1">Belongs to the acyl carrier protein (ACP) family.</text>
</comment>
<accession>Q9ZLS1</accession>
<evidence type="ECO:0000255" key="1">
    <source>
        <dbReference type="HAMAP-Rule" id="MF_01217"/>
    </source>
</evidence>
<evidence type="ECO:0000255" key="2">
    <source>
        <dbReference type="PROSITE-ProRule" id="PRU00258"/>
    </source>
</evidence>
<protein>
    <recommendedName>
        <fullName evidence="1">Acyl carrier protein</fullName>
        <shortName evidence="1">ACP</shortName>
    </recommendedName>
</protein>
<reference key="1">
    <citation type="journal article" date="1999" name="Nature">
        <title>Genomic sequence comparison of two unrelated isolates of the human gastric pathogen Helicobacter pylori.</title>
        <authorList>
            <person name="Alm R.A."/>
            <person name="Ling L.-S.L."/>
            <person name="Moir D.T."/>
            <person name="King B.L."/>
            <person name="Brown E.D."/>
            <person name="Doig P.C."/>
            <person name="Smith D.R."/>
            <person name="Noonan B."/>
            <person name="Guild B.C."/>
            <person name="deJonge B.L."/>
            <person name="Carmel G."/>
            <person name="Tummino P.J."/>
            <person name="Caruso A."/>
            <person name="Uria-Nickelsen M."/>
            <person name="Mills D.M."/>
            <person name="Ives C."/>
            <person name="Gibson R."/>
            <person name="Merberg D."/>
            <person name="Mills S.D."/>
            <person name="Jiang Q."/>
            <person name="Taylor D.E."/>
            <person name="Vovis G.F."/>
            <person name="Trust T.J."/>
        </authorList>
    </citation>
    <scope>NUCLEOTIDE SEQUENCE [LARGE SCALE GENOMIC DNA]</scope>
    <source>
        <strain>J99 / ATCC 700824</strain>
    </source>
</reference>
<name>ACP_HELPJ</name>
<dbReference type="EMBL" id="AE001439">
    <property type="protein sequence ID" value="AAD06082.1"/>
    <property type="molecule type" value="Genomic_DNA"/>
</dbReference>
<dbReference type="PIR" id="H71922">
    <property type="entry name" value="H71922"/>
</dbReference>
<dbReference type="RefSeq" id="WP_001163095.1">
    <property type="nucleotide sequence ID" value="NZ_CP011330.1"/>
</dbReference>
<dbReference type="SMR" id="Q9ZLS1"/>
<dbReference type="KEGG" id="hpj:jhp_0506"/>
<dbReference type="PATRIC" id="fig|85963.30.peg.489"/>
<dbReference type="eggNOG" id="COG0236">
    <property type="taxonomic scope" value="Bacteria"/>
</dbReference>
<dbReference type="UniPathway" id="UPA00094"/>
<dbReference type="Proteomes" id="UP000000804">
    <property type="component" value="Chromosome"/>
</dbReference>
<dbReference type="GO" id="GO:0005829">
    <property type="term" value="C:cytosol"/>
    <property type="evidence" value="ECO:0007669"/>
    <property type="project" value="TreeGrafter"/>
</dbReference>
<dbReference type="GO" id="GO:0016020">
    <property type="term" value="C:membrane"/>
    <property type="evidence" value="ECO:0007669"/>
    <property type="project" value="GOC"/>
</dbReference>
<dbReference type="GO" id="GO:0000035">
    <property type="term" value="F:acyl binding"/>
    <property type="evidence" value="ECO:0007669"/>
    <property type="project" value="TreeGrafter"/>
</dbReference>
<dbReference type="GO" id="GO:0000036">
    <property type="term" value="F:acyl carrier activity"/>
    <property type="evidence" value="ECO:0007669"/>
    <property type="project" value="UniProtKB-UniRule"/>
</dbReference>
<dbReference type="GO" id="GO:0031177">
    <property type="term" value="F:phosphopantetheine binding"/>
    <property type="evidence" value="ECO:0007669"/>
    <property type="project" value="InterPro"/>
</dbReference>
<dbReference type="GO" id="GO:0009245">
    <property type="term" value="P:lipid A biosynthetic process"/>
    <property type="evidence" value="ECO:0007669"/>
    <property type="project" value="TreeGrafter"/>
</dbReference>
<dbReference type="FunFam" id="1.10.1200.10:FF:000006">
    <property type="entry name" value="Acyl carrier protein"/>
    <property type="match status" value="1"/>
</dbReference>
<dbReference type="Gene3D" id="1.10.1200.10">
    <property type="entry name" value="ACP-like"/>
    <property type="match status" value="1"/>
</dbReference>
<dbReference type="HAMAP" id="MF_01217">
    <property type="entry name" value="Acyl_carrier"/>
    <property type="match status" value="1"/>
</dbReference>
<dbReference type="InterPro" id="IPR003231">
    <property type="entry name" value="ACP"/>
</dbReference>
<dbReference type="InterPro" id="IPR036736">
    <property type="entry name" value="ACP-like_sf"/>
</dbReference>
<dbReference type="InterPro" id="IPR020806">
    <property type="entry name" value="PKS_PP-bd"/>
</dbReference>
<dbReference type="InterPro" id="IPR009081">
    <property type="entry name" value="PP-bd_ACP"/>
</dbReference>
<dbReference type="InterPro" id="IPR006162">
    <property type="entry name" value="Ppantetheine_attach_site"/>
</dbReference>
<dbReference type="NCBIfam" id="TIGR00517">
    <property type="entry name" value="acyl_carrier"/>
    <property type="match status" value="1"/>
</dbReference>
<dbReference type="NCBIfam" id="NF002148">
    <property type="entry name" value="PRK00982.1-2"/>
    <property type="match status" value="1"/>
</dbReference>
<dbReference type="NCBIfam" id="NF002150">
    <property type="entry name" value="PRK00982.1-4"/>
    <property type="match status" value="1"/>
</dbReference>
<dbReference type="NCBIfam" id="NF002151">
    <property type="entry name" value="PRK00982.1-5"/>
    <property type="match status" value="1"/>
</dbReference>
<dbReference type="PANTHER" id="PTHR20863">
    <property type="entry name" value="ACYL CARRIER PROTEIN"/>
    <property type="match status" value="1"/>
</dbReference>
<dbReference type="PANTHER" id="PTHR20863:SF76">
    <property type="entry name" value="CARRIER DOMAIN-CONTAINING PROTEIN"/>
    <property type="match status" value="1"/>
</dbReference>
<dbReference type="Pfam" id="PF00550">
    <property type="entry name" value="PP-binding"/>
    <property type="match status" value="1"/>
</dbReference>
<dbReference type="SMART" id="SM00823">
    <property type="entry name" value="PKS_PP"/>
    <property type="match status" value="1"/>
</dbReference>
<dbReference type="SUPFAM" id="SSF47336">
    <property type="entry name" value="ACP-like"/>
    <property type="match status" value="1"/>
</dbReference>
<dbReference type="PROSITE" id="PS50075">
    <property type="entry name" value="CARRIER"/>
    <property type="match status" value="1"/>
</dbReference>
<dbReference type="PROSITE" id="PS00012">
    <property type="entry name" value="PHOSPHOPANTETHEINE"/>
    <property type="match status" value="1"/>
</dbReference>
<proteinExistence type="inferred from homology"/>
<organism>
    <name type="scientific">Helicobacter pylori (strain J99 / ATCC 700824)</name>
    <name type="common">Campylobacter pylori J99</name>
    <dbReference type="NCBI Taxonomy" id="85963"/>
    <lineage>
        <taxon>Bacteria</taxon>
        <taxon>Pseudomonadati</taxon>
        <taxon>Campylobacterota</taxon>
        <taxon>Epsilonproteobacteria</taxon>
        <taxon>Campylobacterales</taxon>
        <taxon>Helicobacteraceae</taxon>
        <taxon>Helicobacter</taxon>
    </lineage>
</organism>
<feature type="chain" id="PRO_0000180145" description="Acyl carrier protein">
    <location>
        <begin position="1"/>
        <end position="78"/>
    </location>
</feature>
<feature type="domain" description="Carrier" evidence="2">
    <location>
        <begin position="1"/>
        <end position="76"/>
    </location>
</feature>
<feature type="modified residue" description="O-(pantetheine 4'-phosphoryl)serine" evidence="2">
    <location>
        <position position="36"/>
    </location>
</feature>
<sequence>MALFEDIQAVIAEQLNVDAAQVTPEAEFVKDLGADSLDVVELIMALEEKFNIEIPDEQAEKIVNVGDVVKYIEDNKLA</sequence>
<gene>
    <name evidence="1" type="primary">acpP</name>
    <name type="ordered locus">jhp_0506</name>
</gene>